<evidence type="ECO:0000255" key="1"/>
<evidence type="ECO:0000305" key="2"/>
<proteinExistence type="evidence at protein level"/>
<comment type="similarity">
    <text evidence="2">Belongs to the PspA/Vipp/IM30 family.</text>
</comment>
<organism>
    <name type="scientific">Deinococcus radiodurans (strain ATCC 13939 / DSM 20539 / JCM 16871 / CCUG 27074 / LMG 4051 / NBRC 15346 / NCIMB 9279 / VKM B-1422 / R1)</name>
    <dbReference type="NCBI Taxonomy" id="243230"/>
    <lineage>
        <taxon>Bacteria</taxon>
        <taxon>Thermotogati</taxon>
        <taxon>Deinococcota</taxon>
        <taxon>Deinococci</taxon>
        <taxon>Deinococcales</taxon>
        <taxon>Deinococcaceae</taxon>
        <taxon>Deinococcus</taxon>
    </lineage>
</organism>
<accession>Q9RUB7</accession>
<keyword id="KW-0175">Coiled coil</keyword>
<keyword id="KW-0903">Direct protein sequencing</keyword>
<keyword id="KW-1185">Reference proteome</keyword>
<gene>
    <name type="ordered locus">DR_1473</name>
</gene>
<dbReference type="EMBL" id="AE000513">
    <property type="protein sequence ID" value="AAF11041.1"/>
    <property type="molecule type" value="Genomic_DNA"/>
</dbReference>
<dbReference type="PIR" id="E75390">
    <property type="entry name" value="E75390"/>
</dbReference>
<dbReference type="RefSeq" id="NP_295196.1">
    <property type="nucleotide sequence ID" value="NC_001263.1"/>
</dbReference>
<dbReference type="RefSeq" id="WP_010888112.1">
    <property type="nucleotide sequence ID" value="NC_001263.1"/>
</dbReference>
<dbReference type="SMR" id="Q9RUB7"/>
<dbReference type="FunCoup" id="Q9RUB7">
    <property type="interactions" value="239"/>
</dbReference>
<dbReference type="STRING" id="243230.DR_1473"/>
<dbReference type="PaxDb" id="243230-DR_1473"/>
<dbReference type="EnsemblBacteria" id="AAF11041">
    <property type="protein sequence ID" value="AAF11041"/>
    <property type="gene ID" value="DR_1473"/>
</dbReference>
<dbReference type="GeneID" id="69517712"/>
<dbReference type="KEGG" id="dra:DR_1473"/>
<dbReference type="PATRIC" id="fig|243230.17.peg.1673"/>
<dbReference type="eggNOG" id="COG1842">
    <property type="taxonomic scope" value="Bacteria"/>
</dbReference>
<dbReference type="HOGENOM" id="CLU_056466_3_2_0"/>
<dbReference type="InParanoid" id="Q9RUB7"/>
<dbReference type="OrthoDB" id="9779630at2"/>
<dbReference type="Proteomes" id="UP000002524">
    <property type="component" value="Chromosome 1"/>
</dbReference>
<dbReference type="InterPro" id="IPR007157">
    <property type="entry name" value="PspA_VIPP1"/>
</dbReference>
<dbReference type="PANTHER" id="PTHR31088">
    <property type="entry name" value="MEMBRANE-ASSOCIATED PROTEIN VIPP1, CHLOROPLASTIC"/>
    <property type="match status" value="1"/>
</dbReference>
<dbReference type="PANTHER" id="PTHR31088:SF6">
    <property type="entry name" value="PHAGE SHOCK PROTEIN A"/>
    <property type="match status" value="1"/>
</dbReference>
<dbReference type="Pfam" id="PF04012">
    <property type="entry name" value="PspA_IM30"/>
    <property type="match status" value="1"/>
</dbReference>
<protein>
    <recommendedName>
        <fullName>Phage shock protein A homolog</fullName>
    </recommendedName>
</protein>
<sequence length="223" mass="24607">MSIFDRLSRLLRANVNDMISKAEDPAKIIDQALRDMRSAYADARNEVAGAMAQAAKLEREAGTNSKLAAEYEKKAEEALRGGSEDLAREALRRAQNHKDLAKGFDEQRTVQQSTVDQLKTQLRALEAKIDEMESKKTLLAARQKTAQAGETLDRVSGFSKAGGAMDAFNEMEQKVAGMEDRNKAMGELRNDQDFDAQLKDLGRDKDVDDALAALKAKVQSSNQ</sequence>
<name>PSPA_DEIRA</name>
<reference key="1">
    <citation type="journal article" date="1999" name="Science">
        <title>Genome sequence of the radioresistant bacterium Deinococcus radiodurans R1.</title>
        <authorList>
            <person name="White O."/>
            <person name="Eisen J.A."/>
            <person name="Heidelberg J.F."/>
            <person name="Hickey E.K."/>
            <person name="Peterson J.D."/>
            <person name="Dodson R.J."/>
            <person name="Haft D.H."/>
            <person name="Gwinn M.L."/>
            <person name="Nelson W.C."/>
            <person name="Richardson D.L."/>
            <person name="Moffat K.S."/>
            <person name="Qin H."/>
            <person name="Jiang L."/>
            <person name="Pamphile W."/>
            <person name="Crosby M."/>
            <person name="Shen M."/>
            <person name="Vamathevan J.J."/>
            <person name="Lam P."/>
            <person name="McDonald L.A."/>
            <person name="Utterback T.R."/>
            <person name="Zalewski C."/>
            <person name="Makarova K.S."/>
            <person name="Aravind L."/>
            <person name="Daly M.J."/>
            <person name="Minton K.W."/>
            <person name="Fleischmann R.D."/>
            <person name="Ketchum K.A."/>
            <person name="Nelson K.E."/>
            <person name="Salzberg S.L."/>
            <person name="Smith H.O."/>
            <person name="Venter J.C."/>
            <person name="Fraser C.M."/>
        </authorList>
    </citation>
    <scope>NUCLEOTIDE SEQUENCE [LARGE SCALE GENOMIC DNA]</scope>
    <source>
        <strain>ATCC 13939 / DSM 20539 / JCM 16871 / CCUG 27074 / LMG 4051 / NBRC 15346 / NCIMB 9279 / VKM B-1422 / R1</strain>
    </source>
</reference>
<reference key="2">
    <citation type="journal article" date="2004" name="Biochem. Biophys. Res. Commun.">
        <title>Protein recycling is a major component of post-irradiation recovery in Deinococcus radiodurans strain R1.</title>
        <authorList>
            <person name="Joshi B.S."/>
            <person name="Schmid R."/>
            <person name="Altendorf K."/>
            <person name="Apte S.K."/>
        </authorList>
    </citation>
    <scope>PROTEIN SEQUENCE OF 1-16</scope>
    <source>
        <strain>ATCC 13939 / DSM 20539 / JCM 16871 / CCUG 27074 / LMG 4051 / NBRC 15346 / NCIMB 9279 / VKM B-1422 / R1</strain>
    </source>
</reference>
<feature type="chain" id="PRO_0000166291" description="Phage shock protein A homolog">
    <location>
        <begin position="1"/>
        <end position="223"/>
    </location>
</feature>
<feature type="coiled-coil region" evidence="1">
    <location>
        <begin position="29"/>
        <end position="185"/>
    </location>
</feature>